<evidence type="ECO:0000250" key="1">
    <source>
        <dbReference type="UniProtKB" id="P0A208"/>
    </source>
</evidence>
<evidence type="ECO:0000255" key="2"/>
<evidence type="ECO:0000305" key="3"/>
<evidence type="ECO:0000305" key="4">
    <source>
    </source>
</evidence>
<comment type="function">
    <text evidence="1">A putative bidirectional acetate kinase that may drive flux through the ethanolamine degradation pathway under anoxic conditions. It may generate ATP that can be used by other enzymes (EutA and EutT) in the eut pathway.</text>
</comment>
<comment type="catalytic activity">
    <reaction evidence="1">
        <text>acetate + ATP = acetyl phosphate + ADP</text>
        <dbReference type="Rhea" id="RHEA:11352"/>
        <dbReference type="ChEBI" id="CHEBI:22191"/>
        <dbReference type="ChEBI" id="CHEBI:30089"/>
        <dbReference type="ChEBI" id="CHEBI:30616"/>
        <dbReference type="ChEBI" id="CHEBI:456216"/>
        <dbReference type="EC" id="2.7.2.1"/>
    </reaction>
    <physiologicalReaction direction="left-to-right" evidence="1">
        <dbReference type="Rhea" id="RHEA:11353"/>
    </physiologicalReaction>
    <physiologicalReaction direction="right-to-left" evidence="1">
        <dbReference type="Rhea" id="RHEA:11354"/>
    </physiologicalReaction>
</comment>
<comment type="pathway">
    <text>Amine and polyamine degradation; ethanolamine degradation.</text>
</comment>
<comment type="subcellular location">
    <subcellularLocation>
        <location evidence="1">Bacterial microcompartment</location>
    </subcellularLocation>
</comment>
<comment type="similarity">
    <text evidence="3">Belongs to the EutP/PduV family.</text>
</comment>
<comment type="caution">
    <text evidence="4">In strain MG1655 the eut operon is interrupted by the CPZ-55 prophage, encoding 9 genes situated between eutA and eutB, which are translated in the other direction. CPZ-55 may prevent expression of the eut operon in strain MG1655. Strain W3110 does not have this prophage element and should be able to express the operon.</text>
</comment>
<accession>P76556</accession>
<accession>Q2MAI7</accession>
<gene>
    <name type="primary">eutP</name>
    <name type="synonym">ypfD</name>
    <name type="ordered locus">b2461</name>
    <name type="ordered locus">JW2445</name>
</gene>
<keyword id="KW-0067">ATP-binding</keyword>
<keyword id="KW-1283">Bacterial microcompartment</keyword>
<keyword id="KW-0418">Kinase</keyword>
<keyword id="KW-0547">Nucleotide-binding</keyword>
<keyword id="KW-1185">Reference proteome</keyword>
<keyword id="KW-0808">Transferase</keyword>
<name>EUTP_ECOLI</name>
<dbReference type="EC" id="2.7.2.1" evidence="1"/>
<dbReference type="EMBL" id="U00096">
    <property type="protein sequence ID" value="AAC75514.1"/>
    <property type="molecule type" value="Genomic_DNA"/>
</dbReference>
<dbReference type="EMBL" id="AP009048">
    <property type="protein sequence ID" value="BAE76719.1"/>
    <property type="molecule type" value="Genomic_DNA"/>
</dbReference>
<dbReference type="PIR" id="D65021">
    <property type="entry name" value="D65021"/>
</dbReference>
<dbReference type="RefSeq" id="NP_416956.1">
    <property type="nucleotide sequence ID" value="NC_000913.3"/>
</dbReference>
<dbReference type="RefSeq" id="WP_000820763.1">
    <property type="nucleotide sequence ID" value="NZ_LN832404.1"/>
</dbReference>
<dbReference type="SMR" id="P76556"/>
<dbReference type="BioGRID" id="4260923">
    <property type="interactions" value="26"/>
</dbReference>
<dbReference type="BioGRID" id="851272">
    <property type="interactions" value="1"/>
</dbReference>
<dbReference type="FunCoup" id="P76556">
    <property type="interactions" value="64"/>
</dbReference>
<dbReference type="IntAct" id="P76556">
    <property type="interactions" value="17"/>
</dbReference>
<dbReference type="STRING" id="511145.b2461"/>
<dbReference type="PaxDb" id="511145-b2461"/>
<dbReference type="EnsemblBacteria" id="AAC75514">
    <property type="protein sequence ID" value="AAC75514"/>
    <property type="gene ID" value="b2461"/>
</dbReference>
<dbReference type="GeneID" id="946933"/>
<dbReference type="KEGG" id="ecj:JW2445"/>
<dbReference type="KEGG" id="eco:b2461"/>
<dbReference type="KEGG" id="ecoc:C3026_13655"/>
<dbReference type="PATRIC" id="fig|511145.12.peg.2555"/>
<dbReference type="EchoBASE" id="EB3943"/>
<dbReference type="eggNOG" id="COG4917">
    <property type="taxonomic scope" value="Bacteria"/>
</dbReference>
<dbReference type="HOGENOM" id="CLU_113298_2_0_6"/>
<dbReference type="InParanoid" id="P76556"/>
<dbReference type="OMA" id="PGEYMEN"/>
<dbReference type="OrthoDB" id="8586209at2"/>
<dbReference type="PhylomeDB" id="P76556"/>
<dbReference type="BioCyc" id="EcoCyc:G7291-MONOMER"/>
<dbReference type="UniPathway" id="UPA00560"/>
<dbReference type="PRO" id="PR:P76556"/>
<dbReference type="Proteomes" id="UP000000625">
    <property type="component" value="Chromosome"/>
</dbReference>
<dbReference type="GO" id="GO:0031469">
    <property type="term" value="C:bacterial microcompartment"/>
    <property type="evidence" value="ECO:0007669"/>
    <property type="project" value="UniProtKB-SubCell"/>
</dbReference>
<dbReference type="GO" id="GO:0008776">
    <property type="term" value="F:acetate kinase activity"/>
    <property type="evidence" value="ECO:0007669"/>
    <property type="project" value="UniProtKB-EC"/>
</dbReference>
<dbReference type="GO" id="GO:0005524">
    <property type="term" value="F:ATP binding"/>
    <property type="evidence" value="ECO:0007669"/>
    <property type="project" value="UniProtKB-KW"/>
</dbReference>
<dbReference type="GO" id="GO:0046336">
    <property type="term" value="P:ethanolamine catabolic process"/>
    <property type="evidence" value="ECO:0007669"/>
    <property type="project" value="UniProtKB-UniPathway"/>
</dbReference>
<dbReference type="CDD" id="cd00882">
    <property type="entry name" value="Ras_like_GTPase"/>
    <property type="match status" value="1"/>
</dbReference>
<dbReference type="Gene3D" id="3.40.50.300">
    <property type="entry name" value="P-loop containing nucleotide triphosphate hydrolases"/>
    <property type="match status" value="1"/>
</dbReference>
<dbReference type="InterPro" id="IPR012381">
    <property type="entry name" value="EutP_PduV"/>
</dbReference>
<dbReference type="InterPro" id="IPR027417">
    <property type="entry name" value="P-loop_NTPase"/>
</dbReference>
<dbReference type="NCBIfam" id="TIGR02528">
    <property type="entry name" value="EutP"/>
    <property type="match status" value="1"/>
</dbReference>
<dbReference type="NCBIfam" id="NF012011">
    <property type="entry name" value="PRK15467.1"/>
    <property type="match status" value="1"/>
</dbReference>
<dbReference type="PANTHER" id="PTHR40453:SF2">
    <property type="entry name" value="ACETATE KINASE EUTP-RELATED"/>
    <property type="match status" value="1"/>
</dbReference>
<dbReference type="PANTHER" id="PTHR40453">
    <property type="entry name" value="PROTEIN YOEF"/>
    <property type="match status" value="1"/>
</dbReference>
<dbReference type="Pfam" id="PF10662">
    <property type="entry name" value="PduV-EutP"/>
    <property type="match status" value="1"/>
</dbReference>
<dbReference type="PIRSF" id="PIRSF036409">
    <property type="entry name" value="EutP_PduV"/>
    <property type="match status" value="1"/>
</dbReference>
<dbReference type="SUPFAM" id="SSF52540">
    <property type="entry name" value="P-loop containing nucleoside triphosphate hydrolases"/>
    <property type="match status" value="1"/>
</dbReference>
<proteinExistence type="inferred from homology"/>
<feature type="chain" id="PRO_0000087094" description="Probable acetate kinase EutP">
    <location>
        <begin position="1"/>
        <end position="159"/>
    </location>
</feature>
<feature type="binding site" evidence="2">
    <location>
        <begin position="8"/>
        <end position="15"/>
    </location>
    <ligand>
        <name>ATP</name>
        <dbReference type="ChEBI" id="CHEBI:30616"/>
    </ligand>
</feature>
<protein>
    <recommendedName>
        <fullName>Probable acetate kinase EutP</fullName>
        <ecNumber evidence="1">2.7.2.1</ecNumber>
    </recommendedName>
    <alternativeName>
        <fullName>Ethanolamine utilization protein EutP</fullName>
    </alternativeName>
</protein>
<organism>
    <name type="scientific">Escherichia coli (strain K12)</name>
    <dbReference type="NCBI Taxonomy" id="83333"/>
    <lineage>
        <taxon>Bacteria</taxon>
        <taxon>Pseudomonadati</taxon>
        <taxon>Pseudomonadota</taxon>
        <taxon>Gammaproteobacteria</taxon>
        <taxon>Enterobacterales</taxon>
        <taxon>Enterobacteriaceae</taxon>
        <taxon>Escherichia</taxon>
    </lineage>
</organism>
<reference key="1">
    <citation type="journal article" date="1997" name="Science">
        <title>The complete genome sequence of Escherichia coli K-12.</title>
        <authorList>
            <person name="Blattner F.R."/>
            <person name="Plunkett G. III"/>
            <person name="Bloch C.A."/>
            <person name="Perna N.T."/>
            <person name="Burland V."/>
            <person name="Riley M."/>
            <person name="Collado-Vides J."/>
            <person name="Glasner J.D."/>
            <person name="Rode C.K."/>
            <person name="Mayhew G.F."/>
            <person name="Gregor J."/>
            <person name="Davis N.W."/>
            <person name="Kirkpatrick H.A."/>
            <person name="Goeden M.A."/>
            <person name="Rose D.J."/>
            <person name="Mau B."/>
            <person name="Shao Y."/>
        </authorList>
    </citation>
    <scope>NUCLEOTIDE SEQUENCE [LARGE SCALE GENOMIC DNA]</scope>
    <source>
        <strain>K12 / MG1655 / ATCC 47076</strain>
    </source>
</reference>
<reference key="2">
    <citation type="journal article" date="2006" name="Mol. Syst. Biol.">
        <title>Highly accurate genome sequences of Escherichia coli K-12 strains MG1655 and W3110.</title>
        <authorList>
            <person name="Hayashi K."/>
            <person name="Morooka N."/>
            <person name="Yamamoto Y."/>
            <person name="Fujita K."/>
            <person name="Isono K."/>
            <person name="Choi S."/>
            <person name="Ohtsubo E."/>
            <person name="Baba T."/>
            <person name="Wanner B.L."/>
            <person name="Mori H."/>
            <person name="Horiuchi T."/>
        </authorList>
    </citation>
    <scope>NUCLEOTIDE SEQUENCE [LARGE SCALE GENOMIC DNA]</scope>
    <source>
        <strain>K12 / W3110 / ATCC 27325 / DSM 5911</strain>
    </source>
</reference>
<sequence length="159" mass="17659">MKRIAFVGSVGAGKTTLFNALQGNYTLARKTQAVEFNDKGDIDTPGEYFNHPRWYHALITTLQDVDMLIYVHGANDPESRLPAGLLDIGVSKRQIAVISKTDMPDADVAATRKLLLETGFEEPMFELNSHDPQSVQQLVDYLASLTKQEEAGEKTHHSE</sequence>